<gene>
    <name evidence="1" type="primary">lgt</name>
    <name type="ordered locus">R02343</name>
    <name type="ORF">SMc02681</name>
</gene>
<reference key="1">
    <citation type="journal article" date="2001" name="Proc. Natl. Acad. Sci. U.S.A.">
        <title>Analysis of the chromosome sequence of the legume symbiont Sinorhizobium meliloti strain 1021.</title>
        <authorList>
            <person name="Capela D."/>
            <person name="Barloy-Hubler F."/>
            <person name="Gouzy J."/>
            <person name="Bothe G."/>
            <person name="Ampe F."/>
            <person name="Batut J."/>
            <person name="Boistard P."/>
            <person name="Becker A."/>
            <person name="Boutry M."/>
            <person name="Cadieu E."/>
            <person name="Dreano S."/>
            <person name="Gloux S."/>
            <person name="Godrie T."/>
            <person name="Goffeau A."/>
            <person name="Kahn D."/>
            <person name="Kiss E."/>
            <person name="Lelaure V."/>
            <person name="Masuy D."/>
            <person name="Pohl T."/>
            <person name="Portetelle D."/>
            <person name="Puehler A."/>
            <person name="Purnelle B."/>
            <person name="Ramsperger U."/>
            <person name="Renard C."/>
            <person name="Thebault P."/>
            <person name="Vandenbol M."/>
            <person name="Weidner S."/>
            <person name="Galibert F."/>
        </authorList>
    </citation>
    <scope>NUCLEOTIDE SEQUENCE [LARGE SCALE GENOMIC DNA]</scope>
    <source>
        <strain>1021</strain>
    </source>
</reference>
<reference key="2">
    <citation type="journal article" date="2001" name="Science">
        <title>The composite genome of the legume symbiont Sinorhizobium meliloti.</title>
        <authorList>
            <person name="Galibert F."/>
            <person name="Finan T.M."/>
            <person name="Long S.R."/>
            <person name="Puehler A."/>
            <person name="Abola P."/>
            <person name="Ampe F."/>
            <person name="Barloy-Hubler F."/>
            <person name="Barnett M.J."/>
            <person name="Becker A."/>
            <person name="Boistard P."/>
            <person name="Bothe G."/>
            <person name="Boutry M."/>
            <person name="Bowser L."/>
            <person name="Buhrmester J."/>
            <person name="Cadieu E."/>
            <person name="Capela D."/>
            <person name="Chain P."/>
            <person name="Cowie A."/>
            <person name="Davis R.W."/>
            <person name="Dreano S."/>
            <person name="Federspiel N.A."/>
            <person name="Fisher R.F."/>
            <person name="Gloux S."/>
            <person name="Godrie T."/>
            <person name="Goffeau A."/>
            <person name="Golding B."/>
            <person name="Gouzy J."/>
            <person name="Gurjal M."/>
            <person name="Hernandez-Lucas I."/>
            <person name="Hong A."/>
            <person name="Huizar L."/>
            <person name="Hyman R.W."/>
            <person name="Jones T."/>
            <person name="Kahn D."/>
            <person name="Kahn M.L."/>
            <person name="Kalman S."/>
            <person name="Keating D.H."/>
            <person name="Kiss E."/>
            <person name="Komp C."/>
            <person name="Lelaure V."/>
            <person name="Masuy D."/>
            <person name="Palm C."/>
            <person name="Peck M.C."/>
            <person name="Pohl T.M."/>
            <person name="Portetelle D."/>
            <person name="Purnelle B."/>
            <person name="Ramsperger U."/>
            <person name="Surzycki R."/>
            <person name="Thebault P."/>
            <person name="Vandenbol M."/>
            <person name="Vorhoelter F.J."/>
            <person name="Weidner S."/>
            <person name="Wells D.H."/>
            <person name="Wong K."/>
            <person name="Yeh K.-C."/>
            <person name="Batut J."/>
        </authorList>
    </citation>
    <scope>NUCLEOTIDE SEQUENCE [LARGE SCALE GENOMIC DNA]</scope>
    <source>
        <strain>1021</strain>
    </source>
</reference>
<organism>
    <name type="scientific">Rhizobium meliloti (strain 1021)</name>
    <name type="common">Ensifer meliloti</name>
    <name type="synonym">Sinorhizobium meliloti</name>
    <dbReference type="NCBI Taxonomy" id="266834"/>
    <lineage>
        <taxon>Bacteria</taxon>
        <taxon>Pseudomonadati</taxon>
        <taxon>Pseudomonadota</taxon>
        <taxon>Alphaproteobacteria</taxon>
        <taxon>Hyphomicrobiales</taxon>
        <taxon>Rhizobiaceae</taxon>
        <taxon>Sinorhizobium/Ensifer group</taxon>
        <taxon>Sinorhizobium</taxon>
    </lineage>
</organism>
<comment type="function">
    <text evidence="1">Catalyzes the transfer of the diacylglyceryl group from phosphatidylglycerol to the sulfhydryl group of the N-terminal cysteine of a prolipoprotein, the first step in the formation of mature lipoproteins.</text>
</comment>
<comment type="catalytic activity">
    <reaction evidence="1">
        <text>L-cysteinyl-[prolipoprotein] + a 1,2-diacyl-sn-glycero-3-phospho-(1'-sn-glycerol) = an S-1,2-diacyl-sn-glyceryl-L-cysteinyl-[prolipoprotein] + sn-glycerol 1-phosphate + H(+)</text>
        <dbReference type="Rhea" id="RHEA:56712"/>
        <dbReference type="Rhea" id="RHEA-COMP:14679"/>
        <dbReference type="Rhea" id="RHEA-COMP:14680"/>
        <dbReference type="ChEBI" id="CHEBI:15378"/>
        <dbReference type="ChEBI" id="CHEBI:29950"/>
        <dbReference type="ChEBI" id="CHEBI:57685"/>
        <dbReference type="ChEBI" id="CHEBI:64716"/>
        <dbReference type="ChEBI" id="CHEBI:140658"/>
        <dbReference type="EC" id="2.5.1.145"/>
    </reaction>
</comment>
<comment type="pathway">
    <text evidence="1">Protein modification; lipoprotein biosynthesis (diacylglyceryl transfer).</text>
</comment>
<comment type="subcellular location">
    <subcellularLocation>
        <location evidence="1">Cell inner membrane</location>
        <topology evidence="1">Multi-pass membrane protein</topology>
    </subcellularLocation>
</comment>
<comment type="similarity">
    <text evidence="1">Belongs to the Lgt family.</text>
</comment>
<protein>
    <recommendedName>
        <fullName evidence="1">Phosphatidylglycerol--prolipoprotein diacylglyceryl transferase</fullName>
        <ecNumber evidence="1">2.5.1.145</ecNumber>
    </recommendedName>
</protein>
<feature type="chain" id="PRO_0000172659" description="Phosphatidylglycerol--prolipoprotein diacylglyceryl transferase">
    <location>
        <begin position="1"/>
        <end position="280"/>
    </location>
</feature>
<feature type="transmembrane region" description="Helical" evidence="1">
    <location>
        <begin position="30"/>
        <end position="50"/>
    </location>
</feature>
<feature type="transmembrane region" description="Helical" evidence="1">
    <location>
        <begin position="71"/>
        <end position="91"/>
    </location>
</feature>
<feature type="transmembrane region" description="Helical" evidence="1">
    <location>
        <begin position="106"/>
        <end position="126"/>
    </location>
</feature>
<feature type="transmembrane region" description="Helical" evidence="1">
    <location>
        <begin position="132"/>
        <end position="152"/>
    </location>
</feature>
<feature type="transmembrane region" description="Helical" evidence="1">
    <location>
        <begin position="188"/>
        <end position="208"/>
    </location>
</feature>
<feature type="transmembrane region" description="Helical" evidence="1">
    <location>
        <begin position="217"/>
        <end position="237"/>
    </location>
</feature>
<feature type="transmembrane region" description="Helical" evidence="1">
    <location>
        <begin position="251"/>
        <end position="271"/>
    </location>
</feature>
<feature type="binding site" evidence="1">
    <location>
        <position position="154"/>
    </location>
    <ligand>
        <name>a 1,2-diacyl-sn-glycero-3-phospho-(1'-sn-glycerol)</name>
        <dbReference type="ChEBI" id="CHEBI:64716"/>
    </ligand>
</feature>
<accession>Q92N77</accession>
<keyword id="KW-0997">Cell inner membrane</keyword>
<keyword id="KW-1003">Cell membrane</keyword>
<keyword id="KW-0472">Membrane</keyword>
<keyword id="KW-1185">Reference proteome</keyword>
<keyword id="KW-0808">Transferase</keyword>
<keyword id="KW-0812">Transmembrane</keyword>
<keyword id="KW-1133">Transmembrane helix</keyword>
<proteinExistence type="inferred from homology"/>
<evidence type="ECO:0000255" key="1">
    <source>
        <dbReference type="HAMAP-Rule" id="MF_01147"/>
    </source>
</evidence>
<name>LGT_RHIME</name>
<sequence>METIATRLAILPFPEIDPVIFTIGPLAVRWYGLAYVAGILLGWLYARRIIQNASLWRNGTAPFNLAQLDDFLLWAAGGIVLGGRIGYILFYDLGSILENPVRAIQIWNGGMSFHGGLLGTTLAIIIFARRNAIPLWSLFDVVAAVVPIGLFFGRIANFINGELWGRLSSMPWAVVFPTGGPFARHPSQLYEAALEGIVLLVVLAWFVYRRRALKMPGLVTGIFVCGYAASRIFVEFFREPDAQIGYLAGDWLTMGMVLSLPMALVGIWAIARARSAAAAA</sequence>
<dbReference type="EC" id="2.5.1.145" evidence="1"/>
<dbReference type="EMBL" id="AL591688">
    <property type="protein sequence ID" value="CAC46922.1"/>
    <property type="molecule type" value="Genomic_DNA"/>
</dbReference>
<dbReference type="RefSeq" id="NP_386449.1">
    <property type="nucleotide sequence ID" value="NC_003047.1"/>
</dbReference>
<dbReference type="RefSeq" id="WP_010969868.1">
    <property type="nucleotide sequence ID" value="NC_003047.1"/>
</dbReference>
<dbReference type="SMR" id="Q92N77"/>
<dbReference type="EnsemblBacteria" id="CAC46922">
    <property type="protein sequence ID" value="CAC46922"/>
    <property type="gene ID" value="SMc02681"/>
</dbReference>
<dbReference type="GeneID" id="89576732"/>
<dbReference type="KEGG" id="sme:SMc02681"/>
<dbReference type="PATRIC" id="fig|266834.11.peg.3823"/>
<dbReference type="eggNOG" id="COG0682">
    <property type="taxonomic scope" value="Bacteria"/>
</dbReference>
<dbReference type="HOGENOM" id="CLU_013386_1_0_5"/>
<dbReference type="OrthoDB" id="871140at2"/>
<dbReference type="UniPathway" id="UPA00664"/>
<dbReference type="Proteomes" id="UP000001976">
    <property type="component" value="Chromosome"/>
</dbReference>
<dbReference type="GO" id="GO:0005886">
    <property type="term" value="C:plasma membrane"/>
    <property type="evidence" value="ECO:0007669"/>
    <property type="project" value="UniProtKB-SubCell"/>
</dbReference>
<dbReference type="GO" id="GO:0008961">
    <property type="term" value="F:phosphatidylglycerol-prolipoprotein diacylglyceryl transferase activity"/>
    <property type="evidence" value="ECO:0007669"/>
    <property type="project" value="UniProtKB-UniRule"/>
</dbReference>
<dbReference type="GO" id="GO:0042158">
    <property type="term" value="P:lipoprotein biosynthetic process"/>
    <property type="evidence" value="ECO:0007669"/>
    <property type="project" value="UniProtKB-UniRule"/>
</dbReference>
<dbReference type="HAMAP" id="MF_01147">
    <property type="entry name" value="Lgt"/>
    <property type="match status" value="1"/>
</dbReference>
<dbReference type="InterPro" id="IPR001640">
    <property type="entry name" value="Lgt"/>
</dbReference>
<dbReference type="NCBIfam" id="TIGR00544">
    <property type="entry name" value="lgt"/>
    <property type="match status" value="1"/>
</dbReference>
<dbReference type="PANTHER" id="PTHR30589:SF0">
    <property type="entry name" value="PHOSPHATIDYLGLYCEROL--PROLIPOPROTEIN DIACYLGLYCERYL TRANSFERASE"/>
    <property type="match status" value="1"/>
</dbReference>
<dbReference type="PANTHER" id="PTHR30589">
    <property type="entry name" value="PROLIPOPROTEIN DIACYLGLYCERYL TRANSFERASE"/>
    <property type="match status" value="1"/>
</dbReference>
<dbReference type="Pfam" id="PF01790">
    <property type="entry name" value="LGT"/>
    <property type="match status" value="1"/>
</dbReference>
<dbReference type="PROSITE" id="PS01311">
    <property type="entry name" value="LGT"/>
    <property type="match status" value="1"/>
</dbReference>